<organism>
    <name type="scientific">Lactobacillus johnsonii (strain CNCM I-12250 / La1 / NCC 533)</name>
    <dbReference type="NCBI Taxonomy" id="257314"/>
    <lineage>
        <taxon>Bacteria</taxon>
        <taxon>Bacillati</taxon>
        <taxon>Bacillota</taxon>
        <taxon>Bacilli</taxon>
        <taxon>Lactobacillales</taxon>
        <taxon>Lactobacillaceae</taxon>
        <taxon>Lactobacillus</taxon>
    </lineage>
</organism>
<accession>Q74KX0</accession>
<reference key="1">
    <citation type="journal article" date="2004" name="Proc. Natl. Acad. Sci. U.S.A.">
        <title>The genome sequence of the probiotic intestinal bacterium Lactobacillus johnsonii NCC 533.</title>
        <authorList>
            <person name="Pridmore R.D."/>
            <person name="Berger B."/>
            <person name="Desiere F."/>
            <person name="Vilanova D."/>
            <person name="Barretto C."/>
            <person name="Pittet A.-C."/>
            <person name="Zwahlen M.-C."/>
            <person name="Rouvet M."/>
            <person name="Altermann E."/>
            <person name="Barrangou R."/>
            <person name="Mollet B."/>
            <person name="Mercenier A."/>
            <person name="Klaenhammer T."/>
            <person name="Arigoni F."/>
            <person name="Schell M.A."/>
        </authorList>
    </citation>
    <scope>NUCLEOTIDE SEQUENCE [LARGE SCALE GENOMIC DNA]</scope>
    <source>
        <strain>CNCM I-1225 / La1 / NCC 533</strain>
    </source>
</reference>
<comment type="function">
    <text evidence="1">Modulates transcription in response to changes in cellular NADH/NAD(+) redox state.</text>
</comment>
<comment type="subunit">
    <text evidence="1">Homodimer.</text>
</comment>
<comment type="subcellular location">
    <subcellularLocation>
        <location evidence="1">Cytoplasm</location>
    </subcellularLocation>
</comment>
<comment type="similarity">
    <text evidence="1">Belongs to the transcriptional regulatory Rex family.</text>
</comment>
<keyword id="KW-0963">Cytoplasm</keyword>
<keyword id="KW-0238">DNA-binding</keyword>
<keyword id="KW-0520">NAD</keyword>
<keyword id="KW-0678">Repressor</keyword>
<keyword id="KW-0804">Transcription</keyword>
<keyword id="KW-0805">Transcription regulation</keyword>
<name>REX_LACJO</name>
<gene>
    <name evidence="1" type="primary">rex</name>
    <name type="ordered locus">LJ_0455</name>
</gene>
<proteinExistence type="inferred from homology"/>
<evidence type="ECO:0000255" key="1">
    <source>
        <dbReference type="HAMAP-Rule" id="MF_01131"/>
    </source>
</evidence>
<feature type="chain" id="PRO_1000065405" description="Redox-sensing transcriptional repressor Rex">
    <location>
        <begin position="1"/>
        <end position="214"/>
    </location>
</feature>
<feature type="DNA-binding region" description="H-T-H motif" evidence="1">
    <location>
        <begin position="16"/>
        <end position="55"/>
    </location>
</feature>
<feature type="binding site" evidence="1">
    <location>
        <begin position="90"/>
        <end position="95"/>
    </location>
    <ligand>
        <name>NAD(+)</name>
        <dbReference type="ChEBI" id="CHEBI:57540"/>
    </ligand>
</feature>
<protein>
    <recommendedName>
        <fullName evidence="1">Redox-sensing transcriptional repressor Rex</fullName>
    </recommendedName>
</protein>
<dbReference type="EMBL" id="AE017198">
    <property type="protein sequence ID" value="AAS08446.1"/>
    <property type="molecule type" value="Genomic_DNA"/>
</dbReference>
<dbReference type="RefSeq" id="WP_003647732.1">
    <property type="nucleotide sequence ID" value="NC_005362.1"/>
</dbReference>
<dbReference type="SMR" id="Q74KX0"/>
<dbReference type="KEGG" id="ljo:LJ_0455"/>
<dbReference type="eggNOG" id="COG2344">
    <property type="taxonomic scope" value="Bacteria"/>
</dbReference>
<dbReference type="HOGENOM" id="CLU_061534_1_1_9"/>
<dbReference type="Proteomes" id="UP000000581">
    <property type="component" value="Chromosome"/>
</dbReference>
<dbReference type="GO" id="GO:0005737">
    <property type="term" value="C:cytoplasm"/>
    <property type="evidence" value="ECO:0007669"/>
    <property type="project" value="UniProtKB-SubCell"/>
</dbReference>
<dbReference type="GO" id="GO:0003677">
    <property type="term" value="F:DNA binding"/>
    <property type="evidence" value="ECO:0007669"/>
    <property type="project" value="UniProtKB-UniRule"/>
</dbReference>
<dbReference type="GO" id="GO:0003700">
    <property type="term" value="F:DNA-binding transcription factor activity"/>
    <property type="evidence" value="ECO:0007669"/>
    <property type="project" value="UniProtKB-UniRule"/>
</dbReference>
<dbReference type="GO" id="GO:0045892">
    <property type="term" value="P:negative regulation of DNA-templated transcription"/>
    <property type="evidence" value="ECO:0007669"/>
    <property type="project" value="InterPro"/>
</dbReference>
<dbReference type="GO" id="GO:0051775">
    <property type="term" value="P:response to redox state"/>
    <property type="evidence" value="ECO:0007669"/>
    <property type="project" value="InterPro"/>
</dbReference>
<dbReference type="Gene3D" id="3.40.50.720">
    <property type="entry name" value="NAD(P)-binding Rossmann-like Domain"/>
    <property type="match status" value="1"/>
</dbReference>
<dbReference type="Gene3D" id="1.10.10.10">
    <property type="entry name" value="Winged helix-like DNA-binding domain superfamily/Winged helix DNA-binding domain"/>
    <property type="match status" value="1"/>
</dbReference>
<dbReference type="HAMAP" id="MF_01131">
    <property type="entry name" value="Rex"/>
    <property type="match status" value="1"/>
</dbReference>
<dbReference type="InterPro" id="IPR003781">
    <property type="entry name" value="CoA-bd"/>
</dbReference>
<dbReference type="InterPro" id="IPR036291">
    <property type="entry name" value="NAD(P)-bd_dom_sf"/>
</dbReference>
<dbReference type="InterPro" id="IPR009718">
    <property type="entry name" value="Rex_DNA-bd_C_dom"/>
</dbReference>
<dbReference type="InterPro" id="IPR022876">
    <property type="entry name" value="Tscrpt_rep_Rex"/>
</dbReference>
<dbReference type="InterPro" id="IPR036388">
    <property type="entry name" value="WH-like_DNA-bd_sf"/>
</dbReference>
<dbReference type="InterPro" id="IPR036390">
    <property type="entry name" value="WH_DNA-bd_sf"/>
</dbReference>
<dbReference type="NCBIfam" id="NF003989">
    <property type="entry name" value="PRK05472.1-3"/>
    <property type="match status" value="1"/>
</dbReference>
<dbReference type="NCBIfam" id="NF003991">
    <property type="entry name" value="PRK05472.1-5"/>
    <property type="match status" value="1"/>
</dbReference>
<dbReference type="NCBIfam" id="NF003994">
    <property type="entry name" value="PRK05472.2-3"/>
    <property type="match status" value="1"/>
</dbReference>
<dbReference type="NCBIfam" id="NF003995">
    <property type="entry name" value="PRK05472.2-4"/>
    <property type="match status" value="1"/>
</dbReference>
<dbReference type="NCBIfam" id="NF003996">
    <property type="entry name" value="PRK05472.2-5"/>
    <property type="match status" value="1"/>
</dbReference>
<dbReference type="PANTHER" id="PTHR35786">
    <property type="entry name" value="REDOX-SENSING TRANSCRIPTIONAL REPRESSOR REX"/>
    <property type="match status" value="1"/>
</dbReference>
<dbReference type="PANTHER" id="PTHR35786:SF1">
    <property type="entry name" value="REDOX-SENSING TRANSCRIPTIONAL REPRESSOR REX 1"/>
    <property type="match status" value="1"/>
</dbReference>
<dbReference type="Pfam" id="PF02629">
    <property type="entry name" value="CoA_binding"/>
    <property type="match status" value="1"/>
</dbReference>
<dbReference type="Pfam" id="PF06971">
    <property type="entry name" value="Put_DNA-bind_N"/>
    <property type="match status" value="1"/>
</dbReference>
<dbReference type="SMART" id="SM00881">
    <property type="entry name" value="CoA_binding"/>
    <property type="match status" value="1"/>
</dbReference>
<dbReference type="SUPFAM" id="SSF51735">
    <property type="entry name" value="NAD(P)-binding Rossmann-fold domains"/>
    <property type="match status" value="1"/>
</dbReference>
<dbReference type="SUPFAM" id="SSF46785">
    <property type="entry name" value="Winged helix' DNA-binding domain"/>
    <property type="match status" value="1"/>
</dbReference>
<sequence>MDEIKIPKATARRLPLYYRYLIFLNDEGKEKVSSTELAEAVQVDSASIRRDFSYFGALGKRGYGYDVKNLLNFFKKILNQDTLTNVALVGVGNMGHALLNYNFKRTNNIRISAAFDINPEITGTIMSGVPVYDMSEMKKQLREQQITIAILCVPQTAAQKTANEMFDAGIKGIMNFTPLRLSAPSSVRVQNVDLATELQTLIYFLDSDKDKNKK</sequence>